<organism>
    <name type="scientific">Shewanella sp. (strain ANA-3)</name>
    <dbReference type="NCBI Taxonomy" id="94122"/>
    <lineage>
        <taxon>Bacteria</taxon>
        <taxon>Pseudomonadati</taxon>
        <taxon>Pseudomonadota</taxon>
        <taxon>Gammaproteobacteria</taxon>
        <taxon>Alteromonadales</taxon>
        <taxon>Shewanellaceae</taxon>
        <taxon>Shewanella</taxon>
    </lineage>
</organism>
<name>MOAC_SHESA</name>
<proteinExistence type="inferred from homology"/>
<keyword id="KW-0456">Lyase</keyword>
<keyword id="KW-0501">Molybdenum cofactor biosynthesis</keyword>
<evidence type="ECO:0000255" key="1">
    <source>
        <dbReference type="HAMAP-Rule" id="MF_01224"/>
    </source>
</evidence>
<feature type="chain" id="PRO_1000054139" description="Cyclic pyranopterin monophosphate synthase">
    <location>
        <begin position="1"/>
        <end position="159"/>
    </location>
</feature>
<feature type="active site" evidence="1">
    <location>
        <position position="129"/>
    </location>
</feature>
<feature type="binding site" evidence="1">
    <location>
        <begin position="76"/>
        <end position="78"/>
    </location>
    <ligand>
        <name>substrate</name>
    </ligand>
</feature>
<feature type="binding site" evidence="1">
    <location>
        <begin position="114"/>
        <end position="115"/>
    </location>
    <ligand>
        <name>substrate</name>
    </ligand>
</feature>
<comment type="function">
    <text evidence="1">Catalyzes the conversion of (8S)-3',8-cyclo-7,8-dihydroguanosine 5'-triphosphate to cyclic pyranopterin monophosphate (cPMP).</text>
</comment>
<comment type="catalytic activity">
    <reaction evidence="1">
        <text>(8S)-3',8-cyclo-7,8-dihydroguanosine 5'-triphosphate = cyclic pyranopterin phosphate + diphosphate</text>
        <dbReference type="Rhea" id="RHEA:49580"/>
        <dbReference type="ChEBI" id="CHEBI:33019"/>
        <dbReference type="ChEBI" id="CHEBI:59648"/>
        <dbReference type="ChEBI" id="CHEBI:131766"/>
        <dbReference type="EC" id="4.6.1.17"/>
    </reaction>
</comment>
<comment type="pathway">
    <text evidence="1">Cofactor biosynthesis; molybdopterin biosynthesis.</text>
</comment>
<comment type="subunit">
    <text evidence="1">Homohexamer; trimer of dimers.</text>
</comment>
<comment type="similarity">
    <text evidence="1">Belongs to the MoaC family.</text>
</comment>
<sequence>MSNVFTHINADGNAHMVDVTEKAVTEREARAEAFIEMASTTLEMIMSGSHHKGDVFATARIAGIQAAKKTSDLIPLCHPLMLTKVEVELEAQPEHNRVRITSLCKLSGKTGVEMEALTAASVAALTIYDMCKAVQKDMVISQVRLLEKRGGKSGHFKAE</sequence>
<reference key="1">
    <citation type="submission" date="2006-09" db="EMBL/GenBank/DDBJ databases">
        <title>Complete sequence of chromosome 1 of Shewanella sp. ANA-3.</title>
        <authorList>
            <person name="Copeland A."/>
            <person name="Lucas S."/>
            <person name="Lapidus A."/>
            <person name="Barry K."/>
            <person name="Detter J.C."/>
            <person name="Glavina del Rio T."/>
            <person name="Hammon N."/>
            <person name="Israni S."/>
            <person name="Dalin E."/>
            <person name="Tice H."/>
            <person name="Pitluck S."/>
            <person name="Chertkov O."/>
            <person name="Brettin T."/>
            <person name="Bruce D."/>
            <person name="Han C."/>
            <person name="Tapia R."/>
            <person name="Gilna P."/>
            <person name="Schmutz J."/>
            <person name="Larimer F."/>
            <person name="Land M."/>
            <person name="Hauser L."/>
            <person name="Kyrpides N."/>
            <person name="Kim E."/>
            <person name="Newman D."/>
            <person name="Salticov C."/>
            <person name="Konstantinidis K."/>
            <person name="Klappenback J."/>
            <person name="Tiedje J."/>
            <person name="Richardson P."/>
        </authorList>
    </citation>
    <scope>NUCLEOTIDE SEQUENCE [LARGE SCALE GENOMIC DNA]</scope>
    <source>
        <strain>ANA-3</strain>
    </source>
</reference>
<accession>A0KRU9</accession>
<protein>
    <recommendedName>
        <fullName evidence="1">Cyclic pyranopterin monophosphate synthase</fullName>
        <ecNumber evidence="1">4.6.1.17</ecNumber>
    </recommendedName>
    <alternativeName>
        <fullName evidence="1">Molybdenum cofactor biosynthesis protein C</fullName>
    </alternativeName>
</protein>
<dbReference type="EC" id="4.6.1.17" evidence="1"/>
<dbReference type="EMBL" id="CP000469">
    <property type="protein sequence ID" value="ABK46518.1"/>
    <property type="molecule type" value="Genomic_DNA"/>
</dbReference>
<dbReference type="RefSeq" id="WP_011074083.1">
    <property type="nucleotide sequence ID" value="NC_008577.1"/>
</dbReference>
<dbReference type="SMR" id="A0KRU9"/>
<dbReference type="STRING" id="94122.Shewana3_0275"/>
<dbReference type="GeneID" id="94726265"/>
<dbReference type="KEGG" id="shn:Shewana3_0275"/>
<dbReference type="eggNOG" id="COG0315">
    <property type="taxonomic scope" value="Bacteria"/>
</dbReference>
<dbReference type="HOGENOM" id="CLU_074693_1_1_6"/>
<dbReference type="OrthoDB" id="9794429at2"/>
<dbReference type="UniPathway" id="UPA00344"/>
<dbReference type="Proteomes" id="UP000002589">
    <property type="component" value="Chromosome"/>
</dbReference>
<dbReference type="GO" id="GO:0061799">
    <property type="term" value="F:cyclic pyranopterin monophosphate synthase activity"/>
    <property type="evidence" value="ECO:0007669"/>
    <property type="project" value="UniProtKB-UniRule"/>
</dbReference>
<dbReference type="GO" id="GO:0061798">
    <property type="term" value="F:GTP 3',8'-cyclase activity"/>
    <property type="evidence" value="ECO:0007669"/>
    <property type="project" value="TreeGrafter"/>
</dbReference>
<dbReference type="GO" id="GO:0006777">
    <property type="term" value="P:Mo-molybdopterin cofactor biosynthetic process"/>
    <property type="evidence" value="ECO:0007669"/>
    <property type="project" value="UniProtKB-UniRule"/>
</dbReference>
<dbReference type="CDD" id="cd01420">
    <property type="entry name" value="MoaC_PE"/>
    <property type="match status" value="1"/>
</dbReference>
<dbReference type="FunFam" id="3.30.70.640:FF:000001">
    <property type="entry name" value="Cyclic pyranopterin monophosphate synthase"/>
    <property type="match status" value="1"/>
</dbReference>
<dbReference type="Gene3D" id="3.30.70.640">
    <property type="entry name" value="Molybdopterin cofactor biosynthesis C (MoaC) domain"/>
    <property type="match status" value="1"/>
</dbReference>
<dbReference type="HAMAP" id="MF_01224_B">
    <property type="entry name" value="MoaC_B"/>
    <property type="match status" value="1"/>
</dbReference>
<dbReference type="InterPro" id="IPR023045">
    <property type="entry name" value="MoaC"/>
</dbReference>
<dbReference type="InterPro" id="IPR047594">
    <property type="entry name" value="MoaC_bact/euk"/>
</dbReference>
<dbReference type="InterPro" id="IPR036522">
    <property type="entry name" value="MoaC_sf"/>
</dbReference>
<dbReference type="InterPro" id="IPR050105">
    <property type="entry name" value="MoCo_biosynth_MoaA/MoaC"/>
</dbReference>
<dbReference type="InterPro" id="IPR002820">
    <property type="entry name" value="Mopterin_CF_biosynth-C_dom"/>
</dbReference>
<dbReference type="NCBIfam" id="TIGR00581">
    <property type="entry name" value="moaC"/>
    <property type="match status" value="1"/>
</dbReference>
<dbReference type="NCBIfam" id="NF006870">
    <property type="entry name" value="PRK09364.1"/>
    <property type="match status" value="1"/>
</dbReference>
<dbReference type="PANTHER" id="PTHR22960:SF0">
    <property type="entry name" value="MOLYBDENUM COFACTOR BIOSYNTHESIS PROTEIN 1"/>
    <property type="match status" value="1"/>
</dbReference>
<dbReference type="PANTHER" id="PTHR22960">
    <property type="entry name" value="MOLYBDOPTERIN COFACTOR SYNTHESIS PROTEIN A"/>
    <property type="match status" value="1"/>
</dbReference>
<dbReference type="Pfam" id="PF01967">
    <property type="entry name" value="MoaC"/>
    <property type="match status" value="1"/>
</dbReference>
<dbReference type="SUPFAM" id="SSF55040">
    <property type="entry name" value="Molybdenum cofactor biosynthesis protein C, MoaC"/>
    <property type="match status" value="1"/>
</dbReference>
<gene>
    <name evidence="1" type="primary">moaC</name>
    <name type="ordered locus">Shewana3_0275</name>
</gene>